<organism>
    <name type="scientific">Eremothecium gossypii (strain ATCC 10895 / CBS 109.51 / FGSC 9923 / NRRL Y-1056)</name>
    <name type="common">Yeast</name>
    <name type="synonym">Ashbya gossypii</name>
    <dbReference type="NCBI Taxonomy" id="284811"/>
    <lineage>
        <taxon>Eukaryota</taxon>
        <taxon>Fungi</taxon>
        <taxon>Dikarya</taxon>
        <taxon>Ascomycota</taxon>
        <taxon>Saccharomycotina</taxon>
        <taxon>Saccharomycetes</taxon>
        <taxon>Saccharomycetales</taxon>
        <taxon>Saccharomycetaceae</taxon>
        <taxon>Eremothecium</taxon>
    </lineage>
</organism>
<feature type="initiator methionine" description="Removed" evidence="1">
    <location>
        <position position="1"/>
    </location>
</feature>
<feature type="chain" id="PRO_0000260176" description="Large ribosomal subunit protein eL42">
    <location>
        <begin position="2"/>
        <end position="106"/>
    </location>
</feature>
<reference key="1">
    <citation type="journal article" date="2004" name="Science">
        <title>The Ashbya gossypii genome as a tool for mapping the ancient Saccharomyces cerevisiae genome.</title>
        <authorList>
            <person name="Dietrich F.S."/>
            <person name="Voegeli S."/>
            <person name="Brachat S."/>
            <person name="Lerch A."/>
            <person name="Gates K."/>
            <person name="Steiner S."/>
            <person name="Mohr C."/>
            <person name="Poehlmann R."/>
            <person name="Luedi P."/>
            <person name="Choi S."/>
            <person name="Wing R.A."/>
            <person name="Flavier A."/>
            <person name="Gaffney T.D."/>
            <person name="Philippsen P."/>
        </authorList>
    </citation>
    <scope>NUCLEOTIDE SEQUENCE [LARGE SCALE GENOMIC DNA]</scope>
    <source>
        <strain>ATCC 10895 / CBS 109.51 / FGSC 9923 / NRRL Y-1056</strain>
    </source>
</reference>
<reference key="2">
    <citation type="journal article" date="2013" name="G3 (Bethesda)">
        <title>Genomes of Ashbya fungi isolated from insects reveal four mating-type loci, numerous translocations, lack of transposons, and distinct gene duplications.</title>
        <authorList>
            <person name="Dietrich F.S."/>
            <person name="Voegeli S."/>
            <person name="Kuo S."/>
            <person name="Philippsen P."/>
        </authorList>
    </citation>
    <scope>GENOME REANNOTATION</scope>
    <source>
        <strain>ATCC 10895 / CBS 109.51 / FGSC 9923 / NRRL Y-1056</strain>
    </source>
</reference>
<comment type="similarity">
    <text evidence="2">Belongs to the eukaryotic ribosomal protein eL42 family.</text>
</comment>
<protein>
    <recommendedName>
        <fullName evidence="2">Large ribosomal subunit protein eL42</fullName>
    </recommendedName>
    <alternativeName>
        <fullName>60S ribosomal protein L44</fullName>
    </alternativeName>
</protein>
<name>RL44_EREGS</name>
<sequence>MVNVPKTRKTYCKGKACRKHTQHKVTQYKAGKASLFAQGKRRYDRKQSGFGGQTKQIFRKKAKTTKKVVLRLECLSCKTKAQLPLKRCKHFELGGEKKQKGQALQF</sequence>
<evidence type="ECO:0000250" key="1"/>
<evidence type="ECO:0000305" key="2"/>
<dbReference type="EMBL" id="AE016819">
    <property type="protein sequence ID" value="AAS53405.1"/>
    <property type="molecule type" value="Genomic_DNA"/>
</dbReference>
<dbReference type="RefSeq" id="NP_985581.1">
    <property type="nucleotide sequence ID" value="NM_210935.1"/>
</dbReference>
<dbReference type="SMR" id="Q754N8"/>
<dbReference type="FunCoup" id="Q754N8">
    <property type="interactions" value="732"/>
</dbReference>
<dbReference type="STRING" id="284811.Q754N8"/>
<dbReference type="EnsemblFungi" id="AAS53405">
    <property type="protein sequence ID" value="AAS53405"/>
    <property type="gene ID" value="AGOS_AFR034W"/>
</dbReference>
<dbReference type="GeneID" id="4621821"/>
<dbReference type="KEGG" id="ago:AGOS_AFR034W"/>
<dbReference type="eggNOG" id="KOG3464">
    <property type="taxonomic scope" value="Eukaryota"/>
</dbReference>
<dbReference type="HOGENOM" id="CLU_114645_2_1_1"/>
<dbReference type="InParanoid" id="Q754N8"/>
<dbReference type="OMA" id="CKKHTIH"/>
<dbReference type="OrthoDB" id="2967263at2759"/>
<dbReference type="Proteomes" id="UP000000591">
    <property type="component" value="Chromosome VI"/>
</dbReference>
<dbReference type="GO" id="GO:0022625">
    <property type="term" value="C:cytosolic large ribosomal subunit"/>
    <property type="evidence" value="ECO:0000318"/>
    <property type="project" value="GO_Central"/>
</dbReference>
<dbReference type="GO" id="GO:0003735">
    <property type="term" value="F:structural constituent of ribosome"/>
    <property type="evidence" value="ECO:0007669"/>
    <property type="project" value="InterPro"/>
</dbReference>
<dbReference type="GO" id="GO:0006412">
    <property type="term" value="P:translation"/>
    <property type="evidence" value="ECO:0007669"/>
    <property type="project" value="InterPro"/>
</dbReference>
<dbReference type="FunFam" id="3.10.450.80:FF:000001">
    <property type="entry name" value="60S ribosomal protein L44"/>
    <property type="match status" value="1"/>
</dbReference>
<dbReference type="Gene3D" id="3.10.450.80">
    <property type="match status" value="1"/>
</dbReference>
<dbReference type="InterPro" id="IPR000552">
    <property type="entry name" value="Ribosomal_eL44"/>
</dbReference>
<dbReference type="InterPro" id="IPR053708">
    <property type="entry name" value="Ribosomal_LSU_eL42"/>
</dbReference>
<dbReference type="InterPro" id="IPR011332">
    <property type="entry name" value="Ribosomal_zn-bd"/>
</dbReference>
<dbReference type="PANTHER" id="PTHR10369">
    <property type="entry name" value="60S RIBOSOMAL PROTEIN L36A/L44"/>
    <property type="match status" value="1"/>
</dbReference>
<dbReference type="Pfam" id="PF00935">
    <property type="entry name" value="Ribosomal_L44"/>
    <property type="match status" value="1"/>
</dbReference>
<dbReference type="SUPFAM" id="SSF57829">
    <property type="entry name" value="Zn-binding ribosomal proteins"/>
    <property type="match status" value="1"/>
</dbReference>
<dbReference type="PROSITE" id="PS01172">
    <property type="entry name" value="RIBOSOMAL_L44E"/>
    <property type="match status" value="1"/>
</dbReference>
<proteinExistence type="inferred from homology"/>
<keyword id="KW-1185">Reference proteome</keyword>
<keyword id="KW-0687">Ribonucleoprotein</keyword>
<keyword id="KW-0689">Ribosomal protein</keyword>
<gene>
    <name type="primary">RPL44</name>
    <name type="ordered locus">AFR034W</name>
</gene>
<accession>Q754N8</accession>